<accession>Q318K9</accession>
<gene>
    <name evidence="1" type="primary">truA</name>
    <name type="ordered locus">PMT9312_1626</name>
</gene>
<sequence length="268" mass="30695">MKRIALLVQYDGSNYSGWQRQKNATTVQETLERALFKITHQVVKTFAAGRTDAGVHASGQVVHFNIDCVIPANSYSDILNGLLPSAIRILESVEVKDSWHSCYSAMYRHYRYVINNSKFPNLFINNWSWHRYQKILDEVLMSNASKLMEGEHDFFAFQKSGSQRKNSITKIKNVEIKRVEDLILVDIKATGFLYGMVRLIVGQLVLVGEKKISPEIFTDIWVNQKKNDVKESAPAKGLCFVNAVYEENVFKKINNNDFFPVFLIKGFS</sequence>
<dbReference type="EC" id="5.4.99.12" evidence="1"/>
<dbReference type="EMBL" id="CP000111">
    <property type="protein sequence ID" value="ABB50686.1"/>
    <property type="molecule type" value="Genomic_DNA"/>
</dbReference>
<dbReference type="RefSeq" id="WP_011377168.1">
    <property type="nucleotide sequence ID" value="NC_007577.1"/>
</dbReference>
<dbReference type="SMR" id="Q318K9"/>
<dbReference type="STRING" id="74546.PMT9312_1626"/>
<dbReference type="KEGG" id="pmi:PMT9312_1626"/>
<dbReference type="eggNOG" id="COG0101">
    <property type="taxonomic scope" value="Bacteria"/>
</dbReference>
<dbReference type="HOGENOM" id="CLU_014673_0_1_3"/>
<dbReference type="OrthoDB" id="9811823at2"/>
<dbReference type="Proteomes" id="UP000002715">
    <property type="component" value="Chromosome"/>
</dbReference>
<dbReference type="GO" id="GO:0003723">
    <property type="term" value="F:RNA binding"/>
    <property type="evidence" value="ECO:0007669"/>
    <property type="project" value="InterPro"/>
</dbReference>
<dbReference type="GO" id="GO:0160147">
    <property type="term" value="F:tRNA pseudouridine(38-40) synthase activity"/>
    <property type="evidence" value="ECO:0007669"/>
    <property type="project" value="UniProtKB-EC"/>
</dbReference>
<dbReference type="GO" id="GO:0031119">
    <property type="term" value="P:tRNA pseudouridine synthesis"/>
    <property type="evidence" value="ECO:0007669"/>
    <property type="project" value="UniProtKB-UniRule"/>
</dbReference>
<dbReference type="CDD" id="cd02570">
    <property type="entry name" value="PseudoU_synth_EcTruA"/>
    <property type="match status" value="1"/>
</dbReference>
<dbReference type="FunFam" id="3.30.70.580:FF:000001">
    <property type="entry name" value="tRNA pseudouridine synthase A"/>
    <property type="match status" value="1"/>
</dbReference>
<dbReference type="Gene3D" id="3.30.70.660">
    <property type="entry name" value="Pseudouridine synthase I, catalytic domain, C-terminal subdomain"/>
    <property type="match status" value="1"/>
</dbReference>
<dbReference type="Gene3D" id="3.30.70.580">
    <property type="entry name" value="Pseudouridine synthase I, catalytic domain, N-terminal subdomain"/>
    <property type="match status" value="1"/>
</dbReference>
<dbReference type="HAMAP" id="MF_00171">
    <property type="entry name" value="TruA"/>
    <property type="match status" value="1"/>
</dbReference>
<dbReference type="InterPro" id="IPR020103">
    <property type="entry name" value="PsdUridine_synth_cat_dom_sf"/>
</dbReference>
<dbReference type="InterPro" id="IPR001406">
    <property type="entry name" value="PsdUridine_synth_TruA"/>
</dbReference>
<dbReference type="InterPro" id="IPR020097">
    <property type="entry name" value="PsdUridine_synth_TruA_a/b_dom"/>
</dbReference>
<dbReference type="InterPro" id="IPR020095">
    <property type="entry name" value="PsdUridine_synth_TruA_C"/>
</dbReference>
<dbReference type="InterPro" id="IPR020094">
    <property type="entry name" value="TruA/RsuA/RluB/E/F_N"/>
</dbReference>
<dbReference type="NCBIfam" id="TIGR00071">
    <property type="entry name" value="hisT_truA"/>
    <property type="match status" value="1"/>
</dbReference>
<dbReference type="PANTHER" id="PTHR11142">
    <property type="entry name" value="PSEUDOURIDYLATE SYNTHASE"/>
    <property type="match status" value="1"/>
</dbReference>
<dbReference type="PANTHER" id="PTHR11142:SF0">
    <property type="entry name" value="TRNA PSEUDOURIDINE SYNTHASE-LIKE 1"/>
    <property type="match status" value="1"/>
</dbReference>
<dbReference type="Pfam" id="PF01416">
    <property type="entry name" value="PseudoU_synth_1"/>
    <property type="match status" value="2"/>
</dbReference>
<dbReference type="PIRSF" id="PIRSF001430">
    <property type="entry name" value="tRNA_psdUrid_synth"/>
    <property type="match status" value="1"/>
</dbReference>
<dbReference type="SUPFAM" id="SSF55120">
    <property type="entry name" value="Pseudouridine synthase"/>
    <property type="match status" value="1"/>
</dbReference>
<comment type="function">
    <text evidence="1">Formation of pseudouridine at positions 38, 39 and 40 in the anticodon stem and loop of transfer RNAs.</text>
</comment>
<comment type="catalytic activity">
    <reaction evidence="1">
        <text>uridine(38/39/40) in tRNA = pseudouridine(38/39/40) in tRNA</text>
        <dbReference type="Rhea" id="RHEA:22376"/>
        <dbReference type="Rhea" id="RHEA-COMP:10085"/>
        <dbReference type="Rhea" id="RHEA-COMP:10087"/>
        <dbReference type="ChEBI" id="CHEBI:65314"/>
        <dbReference type="ChEBI" id="CHEBI:65315"/>
        <dbReference type="EC" id="5.4.99.12"/>
    </reaction>
</comment>
<comment type="subunit">
    <text evidence="1">Homodimer.</text>
</comment>
<comment type="similarity">
    <text evidence="1">Belongs to the tRNA pseudouridine synthase TruA family.</text>
</comment>
<protein>
    <recommendedName>
        <fullName evidence="1">tRNA pseudouridine synthase A</fullName>
        <ecNumber evidence="1">5.4.99.12</ecNumber>
    </recommendedName>
    <alternativeName>
        <fullName evidence="1">tRNA pseudouridine(38-40) synthase</fullName>
    </alternativeName>
    <alternativeName>
        <fullName evidence="1">tRNA pseudouridylate synthase I</fullName>
    </alternativeName>
    <alternativeName>
        <fullName evidence="1">tRNA-uridine isomerase I</fullName>
    </alternativeName>
</protein>
<organism>
    <name type="scientific">Prochlorococcus marinus (strain MIT 9312)</name>
    <dbReference type="NCBI Taxonomy" id="74546"/>
    <lineage>
        <taxon>Bacteria</taxon>
        <taxon>Bacillati</taxon>
        <taxon>Cyanobacteriota</taxon>
        <taxon>Cyanophyceae</taxon>
        <taxon>Synechococcales</taxon>
        <taxon>Prochlorococcaceae</taxon>
        <taxon>Prochlorococcus</taxon>
    </lineage>
</organism>
<name>TRUA_PROM9</name>
<reference key="1">
    <citation type="journal article" date="2006" name="Science">
        <title>Genomic islands and the ecology and evolution of Prochlorococcus.</title>
        <authorList>
            <person name="Coleman M.L."/>
            <person name="Sullivan M.B."/>
            <person name="Martiny A.C."/>
            <person name="Steglich C."/>
            <person name="Barry K."/>
            <person name="Delong E.F."/>
            <person name="Chisholm S.W."/>
        </authorList>
    </citation>
    <scope>NUCLEOTIDE SEQUENCE [LARGE SCALE GENOMIC DNA]</scope>
    <source>
        <strain>MIT 9312</strain>
    </source>
</reference>
<feature type="chain" id="PRO_1000017139" description="tRNA pseudouridine synthase A">
    <location>
        <begin position="1"/>
        <end position="268"/>
    </location>
</feature>
<feature type="active site" description="Nucleophile" evidence="1">
    <location>
        <position position="52"/>
    </location>
</feature>
<feature type="binding site" evidence="1">
    <location>
        <position position="110"/>
    </location>
    <ligand>
        <name>substrate</name>
    </ligand>
</feature>
<proteinExistence type="inferred from homology"/>
<keyword id="KW-0413">Isomerase</keyword>
<keyword id="KW-0819">tRNA processing</keyword>
<evidence type="ECO:0000255" key="1">
    <source>
        <dbReference type="HAMAP-Rule" id="MF_00171"/>
    </source>
</evidence>